<protein>
    <recommendedName>
        <fullName evidence="2">Phosphoserine aminotransferase</fullName>
        <ecNumber evidence="2">2.6.1.52</ecNumber>
    </recommendedName>
    <alternativeName>
        <fullName evidence="2">Phosphohydroxythreonine aminotransferase</fullName>
        <shortName evidence="2">PSAT</shortName>
    </alternativeName>
</protein>
<reference key="1">
    <citation type="journal article" date="2001" name="Nature">
        <title>Genome sequence of enterohaemorrhagic Escherichia coli O157:H7.</title>
        <authorList>
            <person name="Perna N.T."/>
            <person name="Plunkett G. III"/>
            <person name="Burland V."/>
            <person name="Mau B."/>
            <person name="Glasner J.D."/>
            <person name="Rose D.J."/>
            <person name="Mayhew G.F."/>
            <person name="Evans P.S."/>
            <person name="Gregor J."/>
            <person name="Kirkpatrick H.A."/>
            <person name="Posfai G."/>
            <person name="Hackett J."/>
            <person name="Klink S."/>
            <person name="Boutin A."/>
            <person name="Shao Y."/>
            <person name="Miller L."/>
            <person name="Grotbeck E.J."/>
            <person name="Davis N.W."/>
            <person name="Lim A."/>
            <person name="Dimalanta E.T."/>
            <person name="Potamousis K."/>
            <person name="Apodaca J."/>
            <person name="Anantharaman T.S."/>
            <person name="Lin J."/>
            <person name="Yen G."/>
            <person name="Schwartz D.C."/>
            <person name="Welch R.A."/>
            <person name="Blattner F.R."/>
        </authorList>
    </citation>
    <scope>NUCLEOTIDE SEQUENCE [LARGE SCALE GENOMIC DNA]</scope>
    <source>
        <strain>O157:H7 / EDL933 / ATCC 700927 / EHEC</strain>
    </source>
</reference>
<reference key="2">
    <citation type="journal article" date="2001" name="DNA Res.">
        <title>Complete genome sequence of enterohemorrhagic Escherichia coli O157:H7 and genomic comparison with a laboratory strain K-12.</title>
        <authorList>
            <person name="Hayashi T."/>
            <person name="Makino K."/>
            <person name="Ohnishi M."/>
            <person name="Kurokawa K."/>
            <person name="Ishii K."/>
            <person name="Yokoyama K."/>
            <person name="Han C.-G."/>
            <person name="Ohtsubo E."/>
            <person name="Nakayama K."/>
            <person name="Murata T."/>
            <person name="Tanaka M."/>
            <person name="Tobe T."/>
            <person name="Iida T."/>
            <person name="Takami H."/>
            <person name="Honda T."/>
            <person name="Sasakawa C."/>
            <person name="Ogasawara N."/>
            <person name="Yasunaga T."/>
            <person name="Kuhara S."/>
            <person name="Shiba T."/>
            <person name="Hattori M."/>
            <person name="Shinagawa H."/>
        </authorList>
    </citation>
    <scope>NUCLEOTIDE SEQUENCE [LARGE SCALE GENOMIC DNA]</scope>
    <source>
        <strain>O157:H7 / Sakai / RIMD 0509952 / EHEC</strain>
    </source>
</reference>
<gene>
    <name evidence="2" type="primary">serC</name>
    <name type="ordered locus">Z1253</name>
    <name type="ordered locus">ECs0990</name>
</gene>
<sequence length="362" mass="39854">MAQIFNFSSGPAMLPVEVLKQAQQELRDWNGLGTSVMEVSHRGKEFIQVAEEAEKDFRDLLNVPSNYKVLFCHGGGRGQFAAVPLNILGDKTTADYVDAGYWAASAIKEAKKYCTPNVFDAKVTVDGLRAVKPMREWQLSDNAAYMHYCPNETIDGIAIDETPDFGKDVVVAADFSSTILSRPIDVSRYGVIYAGAQKNIGPAGLTIVIVREDLLGKANVACPSILDYSILNDNGSMFNTPPTFAWYLSGLVFKWLKANGGVAEMDKINQQKAELLYGVIDNSDFYRNDVAKANRSRMNVPFQLADSALDKLFLEESFAAGLHALKGHRVVGGMRASIYNAMPLEGVKALTDFMVEFERRHG</sequence>
<accession>Q8XEA7</accession>
<comment type="function">
    <text evidence="2">Catalyzes the reversible conversion of 3-phosphohydroxypyruvate to phosphoserine and of 3-hydroxy-2-oxo-4-phosphonooxybutanoate to phosphohydroxythreonine.</text>
</comment>
<comment type="catalytic activity">
    <reaction evidence="2">
        <text>O-phospho-L-serine + 2-oxoglutarate = 3-phosphooxypyruvate + L-glutamate</text>
        <dbReference type="Rhea" id="RHEA:14329"/>
        <dbReference type="ChEBI" id="CHEBI:16810"/>
        <dbReference type="ChEBI" id="CHEBI:18110"/>
        <dbReference type="ChEBI" id="CHEBI:29985"/>
        <dbReference type="ChEBI" id="CHEBI:57524"/>
        <dbReference type="EC" id="2.6.1.52"/>
    </reaction>
</comment>
<comment type="catalytic activity">
    <reaction evidence="2">
        <text>4-(phosphooxy)-L-threonine + 2-oxoglutarate = (R)-3-hydroxy-2-oxo-4-phosphooxybutanoate + L-glutamate</text>
        <dbReference type="Rhea" id="RHEA:16573"/>
        <dbReference type="ChEBI" id="CHEBI:16810"/>
        <dbReference type="ChEBI" id="CHEBI:29985"/>
        <dbReference type="ChEBI" id="CHEBI:58452"/>
        <dbReference type="ChEBI" id="CHEBI:58538"/>
        <dbReference type="EC" id="2.6.1.52"/>
    </reaction>
</comment>
<comment type="cofactor">
    <cofactor evidence="2">
        <name>pyridoxal 5'-phosphate</name>
        <dbReference type="ChEBI" id="CHEBI:597326"/>
    </cofactor>
    <text evidence="2">Binds 1 pyridoxal phosphate per subunit.</text>
</comment>
<comment type="pathway">
    <text evidence="2">Amino-acid biosynthesis; L-serine biosynthesis; L-serine from 3-phospho-D-glycerate: step 2/3.</text>
</comment>
<comment type="pathway">
    <text evidence="2">Cofactor biosynthesis; pyridoxine 5'-phosphate biosynthesis; pyridoxine 5'-phosphate from D-erythrose 4-phosphate: step 3/5.</text>
</comment>
<comment type="subunit">
    <text evidence="2">Homodimer.</text>
</comment>
<comment type="subcellular location">
    <subcellularLocation>
        <location evidence="2">Cytoplasm</location>
    </subcellularLocation>
</comment>
<comment type="similarity">
    <text evidence="2">Belongs to the class-V pyridoxal-phosphate-dependent aminotransferase family. SerC subfamily.</text>
</comment>
<evidence type="ECO:0000250" key="1"/>
<evidence type="ECO:0000255" key="2">
    <source>
        <dbReference type="HAMAP-Rule" id="MF_00160"/>
    </source>
</evidence>
<dbReference type="EC" id="2.6.1.52" evidence="2"/>
<dbReference type="EMBL" id="AE005174">
    <property type="protein sequence ID" value="AAG55392.1"/>
    <property type="molecule type" value="Genomic_DNA"/>
</dbReference>
<dbReference type="EMBL" id="BA000007">
    <property type="protein sequence ID" value="BAB34413.1"/>
    <property type="molecule type" value="Genomic_DNA"/>
</dbReference>
<dbReference type="PIR" id="D85616">
    <property type="entry name" value="D85616"/>
</dbReference>
<dbReference type="PIR" id="F90752">
    <property type="entry name" value="F90752"/>
</dbReference>
<dbReference type="RefSeq" id="NP_309017.1">
    <property type="nucleotide sequence ID" value="NC_002695.1"/>
</dbReference>
<dbReference type="RefSeq" id="WP_000057165.1">
    <property type="nucleotide sequence ID" value="NZ_VOAI01000006.1"/>
</dbReference>
<dbReference type="SMR" id="Q8XEA7"/>
<dbReference type="STRING" id="155864.Z1253"/>
<dbReference type="GeneID" id="917733"/>
<dbReference type="KEGG" id="ece:Z1253"/>
<dbReference type="KEGG" id="ecs:ECs_0990"/>
<dbReference type="PATRIC" id="fig|386585.9.peg.1109"/>
<dbReference type="eggNOG" id="COG1932">
    <property type="taxonomic scope" value="Bacteria"/>
</dbReference>
<dbReference type="HOGENOM" id="CLU_034866_0_2_6"/>
<dbReference type="OMA" id="AFVYFCD"/>
<dbReference type="UniPathway" id="UPA00135">
    <property type="reaction ID" value="UER00197"/>
</dbReference>
<dbReference type="UniPathway" id="UPA00244">
    <property type="reaction ID" value="UER00311"/>
</dbReference>
<dbReference type="Proteomes" id="UP000000558">
    <property type="component" value="Chromosome"/>
</dbReference>
<dbReference type="Proteomes" id="UP000002519">
    <property type="component" value="Chromosome"/>
</dbReference>
<dbReference type="GO" id="GO:0005737">
    <property type="term" value="C:cytoplasm"/>
    <property type="evidence" value="ECO:0007669"/>
    <property type="project" value="UniProtKB-SubCell"/>
</dbReference>
<dbReference type="GO" id="GO:0004648">
    <property type="term" value="F:O-phospho-L-serine:2-oxoglutarate aminotransferase activity"/>
    <property type="evidence" value="ECO:0007669"/>
    <property type="project" value="UniProtKB-UniRule"/>
</dbReference>
<dbReference type="GO" id="GO:0030170">
    <property type="term" value="F:pyridoxal phosphate binding"/>
    <property type="evidence" value="ECO:0007669"/>
    <property type="project" value="UniProtKB-UniRule"/>
</dbReference>
<dbReference type="GO" id="GO:0006564">
    <property type="term" value="P:L-serine biosynthetic process"/>
    <property type="evidence" value="ECO:0007669"/>
    <property type="project" value="UniProtKB-UniRule"/>
</dbReference>
<dbReference type="GO" id="GO:0008615">
    <property type="term" value="P:pyridoxine biosynthetic process"/>
    <property type="evidence" value="ECO:0007669"/>
    <property type="project" value="UniProtKB-UniRule"/>
</dbReference>
<dbReference type="CDD" id="cd00611">
    <property type="entry name" value="PSAT_like"/>
    <property type="match status" value="1"/>
</dbReference>
<dbReference type="FunFam" id="3.40.640.10:FF:000010">
    <property type="entry name" value="Phosphoserine aminotransferase"/>
    <property type="match status" value="1"/>
</dbReference>
<dbReference type="FunFam" id="3.90.1150.10:FF:000006">
    <property type="entry name" value="Phosphoserine aminotransferase"/>
    <property type="match status" value="1"/>
</dbReference>
<dbReference type="Gene3D" id="3.90.1150.10">
    <property type="entry name" value="Aspartate Aminotransferase, domain 1"/>
    <property type="match status" value="1"/>
</dbReference>
<dbReference type="Gene3D" id="3.40.640.10">
    <property type="entry name" value="Type I PLP-dependent aspartate aminotransferase-like (Major domain)"/>
    <property type="match status" value="1"/>
</dbReference>
<dbReference type="HAMAP" id="MF_00160">
    <property type="entry name" value="SerC_aminotrans_5"/>
    <property type="match status" value="1"/>
</dbReference>
<dbReference type="InterPro" id="IPR000192">
    <property type="entry name" value="Aminotrans_V_dom"/>
</dbReference>
<dbReference type="InterPro" id="IPR020578">
    <property type="entry name" value="Aminotrans_V_PyrdxlP_BS"/>
</dbReference>
<dbReference type="InterPro" id="IPR022278">
    <property type="entry name" value="Pser_aminoTfrase"/>
</dbReference>
<dbReference type="InterPro" id="IPR015424">
    <property type="entry name" value="PyrdxlP-dep_Trfase"/>
</dbReference>
<dbReference type="InterPro" id="IPR015421">
    <property type="entry name" value="PyrdxlP-dep_Trfase_major"/>
</dbReference>
<dbReference type="InterPro" id="IPR015422">
    <property type="entry name" value="PyrdxlP-dep_Trfase_small"/>
</dbReference>
<dbReference type="NCBIfam" id="NF003764">
    <property type="entry name" value="PRK05355.1"/>
    <property type="match status" value="1"/>
</dbReference>
<dbReference type="NCBIfam" id="TIGR01364">
    <property type="entry name" value="serC_1"/>
    <property type="match status" value="1"/>
</dbReference>
<dbReference type="PANTHER" id="PTHR43247">
    <property type="entry name" value="PHOSPHOSERINE AMINOTRANSFERASE"/>
    <property type="match status" value="1"/>
</dbReference>
<dbReference type="PANTHER" id="PTHR43247:SF1">
    <property type="entry name" value="PHOSPHOSERINE AMINOTRANSFERASE"/>
    <property type="match status" value="1"/>
</dbReference>
<dbReference type="Pfam" id="PF00266">
    <property type="entry name" value="Aminotran_5"/>
    <property type="match status" value="1"/>
</dbReference>
<dbReference type="PIRSF" id="PIRSF000525">
    <property type="entry name" value="SerC"/>
    <property type="match status" value="1"/>
</dbReference>
<dbReference type="SUPFAM" id="SSF53383">
    <property type="entry name" value="PLP-dependent transferases"/>
    <property type="match status" value="1"/>
</dbReference>
<dbReference type="PROSITE" id="PS00595">
    <property type="entry name" value="AA_TRANSFER_CLASS_5"/>
    <property type="match status" value="1"/>
</dbReference>
<proteinExistence type="inferred from homology"/>
<name>SERC_ECO57</name>
<keyword id="KW-0028">Amino-acid biosynthesis</keyword>
<keyword id="KW-0032">Aminotransferase</keyword>
<keyword id="KW-0963">Cytoplasm</keyword>
<keyword id="KW-0663">Pyridoxal phosphate</keyword>
<keyword id="KW-0664">Pyridoxine biosynthesis</keyword>
<keyword id="KW-1185">Reference proteome</keyword>
<keyword id="KW-0718">Serine biosynthesis</keyword>
<keyword id="KW-0808">Transferase</keyword>
<organism>
    <name type="scientific">Escherichia coli O157:H7</name>
    <dbReference type="NCBI Taxonomy" id="83334"/>
    <lineage>
        <taxon>Bacteria</taxon>
        <taxon>Pseudomonadati</taxon>
        <taxon>Pseudomonadota</taxon>
        <taxon>Gammaproteobacteria</taxon>
        <taxon>Enterobacterales</taxon>
        <taxon>Enterobacteriaceae</taxon>
        <taxon>Escherichia</taxon>
    </lineage>
</organism>
<feature type="initiator methionine" description="Removed" evidence="1">
    <location>
        <position position="1"/>
    </location>
</feature>
<feature type="chain" id="PRO_0000150168" description="Phosphoserine aminotransferase">
    <location>
        <begin position="2"/>
        <end position="362"/>
    </location>
</feature>
<feature type="binding site" evidence="2">
    <location>
        <position position="9"/>
    </location>
    <ligand>
        <name>L-glutamate</name>
        <dbReference type="ChEBI" id="CHEBI:29985"/>
    </ligand>
</feature>
<feature type="binding site" evidence="2">
    <location>
        <position position="42"/>
    </location>
    <ligand>
        <name>L-glutamate</name>
        <dbReference type="ChEBI" id="CHEBI:29985"/>
    </ligand>
</feature>
<feature type="binding site" evidence="2">
    <location>
        <begin position="76"/>
        <end position="77"/>
    </location>
    <ligand>
        <name>pyridoxal 5'-phosphate</name>
        <dbReference type="ChEBI" id="CHEBI:597326"/>
    </ligand>
</feature>
<feature type="binding site" evidence="2">
    <location>
        <position position="102"/>
    </location>
    <ligand>
        <name>pyridoxal 5'-phosphate</name>
        <dbReference type="ChEBI" id="CHEBI:597326"/>
    </ligand>
</feature>
<feature type="binding site" evidence="2">
    <location>
        <position position="153"/>
    </location>
    <ligand>
        <name>pyridoxal 5'-phosphate</name>
        <dbReference type="ChEBI" id="CHEBI:597326"/>
    </ligand>
</feature>
<feature type="binding site" evidence="2">
    <location>
        <position position="174"/>
    </location>
    <ligand>
        <name>pyridoxal 5'-phosphate</name>
        <dbReference type="ChEBI" id="CHEBI:597326"/>
    </ligand>
</feature>
<feature type="binding site" evidence="2">
    <location>
        <position position="197"/>
    </location>
    <ligand>
        <name>pyridoxal 5'-phosphate</name>
        <dbReference type="ChEBI" id="CHEBI:597326"/>
    </ligand>
</feature>
<feature type="binding site" evidence="2">
    <location>
        <begin position="239"/>
        <end position="240"/>
    </location>
    <ligand>
        <name>pyridoxal 5'-phosphate</name>
        <dbReference type="ChEBI" id="CHEBI:597326"/>
    </ligand>
</feature>
<feature type="modified residue" description="N6-(pyridoxal phosphate)lysine" evidence="2">
    <location>
        <position position="198"/>
    </location>
</feature>